<comment type="catalytic activity">
    <reaction>
        <text>Release of an N-terminal amino acid, Xaa-|-Yaa- from a peptide, amide or arylamide. Xaa is preferably Ala, but may be most amino acids including Pro (slow action). When a terminal hydrophobic residue is followed by a prolyl residue, the two may be released as an intact Xaa-Pro dipeptide.</text>
        <dbReference type="EC" id="3.4.11.2"/>
    </reaction>
</comment>
<comment type="cofactor">
    <cofactor evidence="1">
        <name>Zn(2+)</name>
        <dbReference type="ChEBI" id="CHEBI:29105"/>
    </cofactor>
    <text evidence="1">Binds 1 zinc ion per subunit.</text>
</comment>
<comment type="subcellular location">
    <subcellularLocation>
        <location evidence="1">Membrane</location>
        <topology evidence="1">Single-pass type II membrane protein</topology>
    </subcellularLocation>
</comment>
<comment type="similarity">
    <text evidence="5">Belongs to the peptidase M1 family.</text>
</comment>
<evidence type="ECO:0000250" key="1"/>
<evidence type="ECO:0000255" key="2"/>
<evidence type="ECO:0000255" key="3">
    <source>
        <dbReference type="PROSITE-ProRule" id="PRU10095"/>
    </source>
</evidence>
<evidence type="ECO:0000256" key="4">
    <source>
        <dbReference type="SAM" id="MobiDB-lite"/>
    </source>
</evidence>
<evidence type="ECO:0000305" key="5"/>
<feature type="initiator methionine" description="Removed" evidence="1">
    <location>
        <position position="1"/>
    </location>
</feature>
<feature type="chain" id="PRO_0000095087" description="Aminopeptidase N">
    <location>
        <begin position="2"/>
        <end position="972"/>
    </location>
</feature>
<feature type="topological domain" description="Cytoplasmic" evidence="2">
    <location>
        <begin position="2"/>
        <end position="17"/>
    </location>
</feature>
<feature type="transmembrane region" description="Helical; Signal-anchor for type II membrane protein" evidence="2">
    <location>
        <begin position="18"/>
        <end position="39"/>
    </location>
</feature>
<feature type="topological domain" description="Extracellular" evidence="2">
    <location>
        <begin position="40"/>
        <end position="972"/>
    </location>
</feature>
<feature type="region of interest" description="Disordered" evidence="4">
    <location>
        <begin position="47"/>
        <end position="66"/>
    </location>
</feature>
<feature type="compositionally biased region" description="Basic and acidic residues" evidence="4">
    <location>
        <begin position="47"/>
        <end position="62"/>
    </location>
</feature>
<feature type="active site" description="Proton acceptor" evidence="3">
    <location>
        <position position="380"/>
    </location>
</feature>
<feature type="binding site" evidence="1">
    <location>
        <position position="208"/>
    </location>
    <ligand>
        <name>substrate</name>
    </ligand>
</feature>
<feature type="binding site" evidence="1">
    <location>
        <begin position="343"/>
        <end position="347"/>
    </location>
    <ligand>
        <name>substrate</name>
    </ligand>
</feature>
<feature type="binding site" evidence="3">
    <location>
        <position position="379"/>
    </location>
    <ligand>
        <name>Zn(2+)</name>
        <dbReference type="ChEBI" id="CHEBI:29105"/>
        <note>catalytic</note>
    </ligand>
</feature>
<feature type="binding site" evidence="3">
    <location>
        <position position="383"/>
    </location>
    <ligand>
        <name>Zn(2+)</name>
        <dbReference type="ChEBI" id="CHEBI:29105"/>
        <note>catalytic</note>
    </ligand>
</feature>
<feature type="binding site" evidence="3">
    <location>
        <position position="402"/>
    </location>
    <ligand>
        <name>Zn(2+)</name>
        <dbReference type="ChEBI" id="CHEBI:29105"/>
        <note>catalytic</note>
    </ligand>
</feature>
<feature type="site" description="Transition state stabilizer" evidence="1">
    <location>
        <position position="466"/>
    </location>
</feature>
<feature type="glycosylation site" description="N-linked (GlcNAc...) asparagine" evidence="2">
    <location>
        <position position="99"/>
    </location>
</feature>
<feature type="glycosylation site" description="N-linked (GlcNAc...) asparagine" evidence="2">
    <location>
        <position position="227"/>
    </location>
</feature>
<feature type="glycosylation site" description="N-linked (GlcNAc...) asparagine" evidence="2">
    <location>
        <position position="549"/>
    </location>
</feature>
<feature type="glycosylation site" description="N-linked (GlcNAc...) asparagine" evidence="2">
    <location>
        <position position="858"/>
    </location>
</feature>
<feature type="disulfide bond" evidence="1">
    <location>
        <begin position="759"/>
        <end position="766"/>
    </location>
</feature>
<feature type="disulfide bond" evidence="1">
    <location>
        <begin position="804"/>
        <end position="840"/>
    </location>
</feature>
<name>AMPN_HAECO</name>
<sequence length="972" mass="110674">MTSQGRTRTLLNLTPIRLIVALFLVAAAVGLSIGLTYYFTRKAFDTSEKPGKDDTGGKDKDNSPSAAELLLPSNIKPLSYDLTIKTYLPGYVDFPPEKNLTFDGRVEISMVVIEPTKSIVLNSKKISVIPQECELVSGDKKLEIESVKEHPRLEKVEFLIKSQLEKDQQILLKVGYIGLISNSFGGIYQTTYTTPDGTPKIAAVSQNEPIDARRMVPCMDEPKYKANWTVTVIHPKGTKAVSNGIEVNGDGEISGDWITSKFLTTPRMSSYLLAVMVSEFEYIEGETKTGVRFRIWSRPEAKKMTQYALQSGIKCIEFYEDFFDIRFPLKKQDMIALPDFSAGAMENWGLITYRENSLLYDDRFYAPMNKQRIARIVAHELAHQWFGDLVTMKWWDNLWLNEGFARFTEFIGAGQITQDDARMRNYFLIDVLERALKADSVASSHPLSFRIDKAAEVEEAFDDITYAKGASVLTMLRALIGEEKHKHAVSQYLKKFSYSNAEATDLWAVFDEVVTDVEGPDGKPMKTTEFASQWTTQMGFPVISVAEFNSTTLKLTQSRYEANKDAVEKEKYRHPKYGFKWDIPLWYQEGDKKEIKRTWLRRDEPLYLHVSDAGAPFVVNADRYGFYRQNHDANGWKKIIKQLKDNHEVYSPRTRNAIISDAFAAAATDAIEYETVFELLNYAEKETEYLPLEIAMSGISSILKYFGTEPEAKPAQTYMMNILKPMYEKSSIDFIANNYRNDKLFFQINLQKDVIDMFCALGSQDCRKKYKKLFDDEVMNKCRDGQAATECVRIAAPLRSSVYCYGVKEGGDYASDKVMELYTAETLALEKDFLRLALGCHKDVTALKGLLLRALDRNSSFVRMQDIPSAFNDVAANPIGGEFIFNFLIERWPDIIESIGTKHTYVEKVIPACTSGIRSQQQIDQLKNLQKNGMNARQFGAFDKAIERAQNRVDWIKKHFQKLAAFFKKATL</sequence>
<proteinExistence type="evidence at transcript level"/>
<accession>Q10737</accession>
<reference key="1">
    <citation type="journal article" date="1997" name="Biochim. Biophys. Acta">
        <title>Cloning and characterization of a microsomal aminopeptidase from the intestine of the nematode Haemonchus contortus.</title>
        <authorList>
            <person name="Smith T.S."/>
            <person name="Graham M."/>
            <person name="Munn E.A."/>
            <person name="Newton S.E."/>
            <person name="Knox D.P."/>
            <person name="Coadwell W.J."/>
            <person name="McMichael-Phillips D."/>
            <person name="Smith H."/>
            <person name="Smith W.D."/>
            <person name="Oliver J.J."/>
        </authorList>
    </citation>
    <scope>NUCLEOTIDE SEQUENCE [MRNA]</scope>
</reference>
<protein>
    <recommendedName>
        <fullName>Aminopeptidase N</fullName>
        <shortName>AP-N</shortName>
        <ecNumber>3.4.11.2</ecNumber>
    </recommendedName>
    <alternativeName>
        <fullName>Membrane glycoprotein H11</fullName>
    </alternativeName>
    <alternativeName>
        <fullName>Microsomal aminopeptidase</fullName>
    </alternativeName>
</protein>
<organism>
    <name type="scientific">Haemonchus contortus</name>
    <name type="common">Barber pole worm</name>
    <dbReference type="NCBI Taxonomy" id="6289"/>
    <lineage>
        <taxon>Eukaryota</taxon>
        <taxon>Metazoa</taxon>
        <taxon>Ecdysozoa</taxon>
        <taxon>Nematoda</taxon>
        <taxon>Chromadorea</taxon>
        <taxon>Rhabditida</taxon>
        <taxon>Rhabditina</taxon>
        <taxon>Rhabditomorpha</taxon>
        <taxon>Strongyloidea</taxon>
        <taxon>Trichostrongylidae</taxon>
        <taxon>Haemonchus</taxon>
    </lineage>
</organism>
<keyword id="KW-0031">Aminopeptidase</keyword>
<keyword id="KW-1015">Disulfide bond</keyword>
<keyword id="KW-0325">Glycoprotein</keyword>
<keyword id="KW-0378">Hydrolase</keyword>
<keyword id="KW-0472">Membrane</keyword>
<keyword id="KW-0479">Metal-binding</keyword>
<keyword id="KW-0482">Metalloprotease</keyword>
<keyword id="KW-0645">Protease</keyword>
<keyword id="KW-0735">Signal-anchor</keyword>
<keyword id="KW-0812">Transmembrane</keyword>
<keyword id="KW-1133">Transmembrane helix</keyword>
<keyword id="KW-0862">Zinc</keyword>
<dbReference type="EC" id="3.4.11.2"/>
<dbReference type="EMBL" id="X94187">
    <property type="protein sequence ID" value="CAA63897.1"/>
    <property type="molecule type" value="mRNA"/>
</dbReference>
<dbReference type="SMR" id="Q10737"/>
<dbReference type="MEROPS" id="M01.015"/>
<dbReference type="Proteomes" id="UP000025227">
    <property type="component" value="Unplaced"/>
</dbReference>
<dbReference type="GO" id="GO:0005737">
    <property type="term" value="C:cytoplasm"/>
    <property type="evidence" value="ECO:0007669"/>
    <property type="project" value="TreeGrafter"/>
</dbReference>
<dbReference type="GO" id="GO:0005615">
    <property type="term" value="C:extracellular space"/>
    <property type="evidence" value="ECO:0007669"/>
    <property type="project" value="TreeGrafter"/>
</dbReference>
<dbReference type="GO" id="GO:0016020">
    <property type="term" value="C:membrane"/>
    <property type="evidence" value="ECO:0007669"/>
    <property type="project" value="UniProtKB-SubCell"/>
</dbReference>
<dbReference type="GO" id="GO:0016285">
    <property type="term" value="F:alanyl aminopeptidase activity"/>
    <property type="evidence" value="ECO:0007669"/>
    <property type="project" value="UniProtKB-EC"/>
</dbReference>
<dbReference type="GO" id="GO:0070006">
    <property type="term" value="F:metalloaminopeptidase activity"/>
    <property type="evidence" value="ECO:0007669"/>
    <property type="project" value="TreeGrafter"/>
</dbReference>
<dbReference type="GO" id="GO:0042277">
    <property type="term" value="F:peptide binding"/>
    <property type="evidence" value="ECO:0007669"/>
    <property type="project" value="TreeGrafter"/>
</dbReference>
<dbReference type="GO" id="GO:0008270">
    <property type="term" value="F:zinc ion binding"/>
    <property type="evidence" value="ECO:0007669"/>
    <property type="project" value="InterPro"/>
</dbReference>
<dbReference type="GO" id="GO:0043171">
    <property type="term" value="P:peptide catabolic process"/>
    <property type="evidence" value="ECO:0007669"/>
    <property type="project" value="TreeGrafter"/>
</dbReference>
<dbReference type="GO" id="GO:0006508">
    <property type="term" value="P:proteolysis"/>
    <property type="evidence" value="ECO:0007669"/>
    <property type="project" value="UniProtKB-KW"/>
</dbReference>
<dbReference type="CDD" id="cd09601">
    <property type="entry name" value="M1_APN-Q_like"/>
    <property type="match status" value="1"/>
</dbReference>
<dbReference type="FunFam" id="1.10.390.10:FF:000006">
    <property type="entry name" value="Puromycin-sensitive aminopeptidase"/>
    <property type="match status" value="1"/>
</dbReference>
<dbReference type="Gene3D" id="1.25.50.20">
    <property type="match status" value="1"/>
</dbReference>
<dbReference type="Gene3D" id="2.60.40.1910">
    <property type="match status" value="1"/>
</dbReference>
<dbReference type="Gene3D" id="1.10.390.10">
    <property type="entry name" value="Neutral Protease Domain 2"/>
    <property type="match status" value="1"/>
</dbReference>
<dbReference type="Gene3D" id="2.60.40.1730">
    <property type="entry name" value="tricorn interacting facor f3 domain"/>
    <property type="match status" value="1"/>
</dbReference>
<dbReference type="InterPro" id="IPR045357">
    <property type="entry name" value="Aminopeptidase_N-like_N"/>
</dbReference>
<dbReference type="InterPro" id="IPR042097">
    <property type="entry name" value="Aminopeptidase_N-like_N_sf"/>
</dbReference>
<dbReference type="InterPro" id="IPR024571">
    <property type="entry name" value="ERAP1-like_C_dom"/>
</dbReference>
<dbReference type="InterPro" id="IPR034016">
    <property type="entry name" value="M1_APN-typ"/>
</dbReference>
<dbReference type="InterPro" id="IPR001930">
    <property type="entry name" value="Peptidase_M1"/>
</dbReference>
<dbReference type="InterPro" id="IPR050344">
    <property type="entry name" value="Peptidase_M1_aminopeptidases"/>
</dbReference>
<dbReference type="InterPro" id="IPR014782">
    <property type="entry name" value="Peptidase_M1_dom"/>
</dbReference>
<dbReference type="InterPro" id="IPR027268">
    <property type="entry name" value="Peptidase_M4/M1_CTD_sf"/>
</dbReference>
<dbReference type="PANTHER" id="PTHR11533:SF301">
    <property type="entry name" value="AMINOPEPTIDASE"/>
    <property type="match status" value="1"/>
</dbReference>
<dbReference type="PANTHER" id="PTHR11533">
    <property type="entry name" value="PROTEASE M1 ZINC METALLOPROTEASE"/>
    <property type="match status" value="1"/>
</dbReference>
<dbReference type="Pfam" id="PF11838">
    <property type="entry name" value="ERAP1_C"/>
    <property type="match status" value="1"/>
</dbReference>
<dbReference type="Pfam" id="PF01433">
    <property type="entry name" value="Peptidase_M1"/>
    <property type="match status" value="1"/>
</dbReference>
<dbReference type="Pfam" id="PF17900">
    <property type="entry name" value="Peptidase_M1_N"/>
    <property type="match status" value="1"/>
</dbReference>
<dbReference type="PRINTS" id="PR00756">
    <property type="entry name" value="ALADIPTASE"/>
</dbReference>
<dbReference type="SUPFAM" id="SSF63737">
    <property type="entry name" value="Leukotriene A4 hydrolase N-terminal domain"/>
    <property type="match status" value="1"/>
</dbReference>
<dbReference type="SUPFAM" id="SSF55486">
    <property type="entry name" value="Metalloproteases ('zincins'), catalytic domain"/>
    <property type="match status" value="1"/>
</dbReference>
<dbReference type="PROSITE" id="PS00142">
    <property type="entry name" value="ZINC_PROTEASE"/>
    <property type="match status" value="1"/>
</dbReference>